<accession>Q316Q0</accession>
<evidence type="ECO:0000255" key="1">
    <source>
        <dbReference type="HAMAP-Rule" id="MF_00318"/>
    </source>
</evidence>
<evidence type="ECO:0000256" key="2">
    <source>
        <dbReference type="SAM" id="MobiDB-lite"/>
    </source>
</evidence>
<sequence length="431" mass="46384">MSTIVSVWAREILDSRGNPTVEVEVSLESGHSGRAAVPSGASTGSREALELRDGDKGRYLGKGVEKAVDNVMGEIAENIVGMDALRQVAVDNALIDLDGTDNKDRLGANAMLGVSLATARAAANFIGMPLYQYLGGINSKVLPVPMMNIINGGEHAPNNLDIQEFMIMPVGAPTFSEALRMGAEIFHNLKALLAADGHVTSVGDEGGFAPNLKSHDEAFRYIMRAIETAGYIPGSEVALAIDAAASEFYKDGKYHLKGENKVLSSSEMIDWLMDFTQRYPLISIEDGMAEGDWEGWQEMTVKMGDSVQIVGDDVFVTNPDILAQGIDEGVANSILIKLNQIGTLTETLDTVEMAKGAGYTTVISHRSGETEDHFIADLAVALNAGQIKTGSLCRSDRLAKYNQLLRIEEDLDDEGIYFGPYMASHFGLGEE</sequence>
<gene>
    <name evidence="1" type="primary">eno</name>
    <name type="ordered locus">Dde_0295</name>
</gene>
<protein>
    <recommendedName>
        <fullName evidence="1">Enolase</fullName>
        <ecNumber evidence="1">4.2.1.11</ecNumber>
    </recommendedName>
    <alternativeName>
        <fullName evidence="1">2-phospho-D-glycerate hydro-lyase</fullName>
    </alternativeName>
    <alternativeName>
        <fullName evidence="1">2-phosphoglycerate dehydratase</fullName>
    </alternativeName>
</protein>
<reference key="1">
    <citation type="journal article" date="2011" name="J. Bacteriol.">
        <title>Complete genome sequence and updated annotation of Desulfovibrio alaskensis G20.</title>
        <authorList>
            <person name="Hauser L.J."/>
            <person name="Land M.L."/>
            <person name="Brown S.D."/>
            <person name="Larimer F."/>
            <person name="Keller K.L."/>
            <person name="Rapp-Giles B.J."/>
            <person name="Price M.N."/>
            <person name="Lin M."/>
            <person name="Bruce D.C."/>
            <person name="Detter J.C."/>
            <person name="Tapia R."/>
            <person name="Han C.S."/>
            <person name="Goodwin L.A."/>
            <person name="Cheng J.F."/>
            <person name="Pitluck S."/>
            <person name="Copeland A."/>
            <person name="Lucas S."/>
            <person name="Nolan M."/>
            <person name="Lapidus A.L."/>
            <person name="Palumbo A.V."/>
            <person name="Wall J.D."/>
        </authorList>
    </citation>
    <scope>NUCLEOTIDE SEQUENCE [LARGE SCALE GENOMIC DNA]</scope>
    <source>
        <strain>ATCC BAA-1058 / DSM 17464 / G20</strain>
    </source>
</reference>
<feature type="chain" id="PRO_0000267028" description="Enolase">
    <location>
        <begin position="1"/>
        <end position="431"/>
    </location>
</feature>
<feature type="region of interest" description="Disordered" evidence="2">
    <location>
        <begin position="27"/>
        <end position="47"/>
    </location>
</feature>
<feature type="active site" description="Proton donor" evidence="1">
    <location>
        <position position="205"/>
    </location>
</feature>
<feature type="active site" description="Proton acceptor" evidence="1">
    <location>
        <position position="337"/>
    </location>
</feature>
<feature type="binding site" evidence="1">
    <location>
        <position position="163"/>
    </location>
    <ligand>
        <name>(2R)-2-phosphoglycerate</name>
        <dbReference type="ChEBI" id="CHEBI:58289"/>
    </ligand>
</feature>
<feature type="binding site" evidence="1">
    <location>
        <position position="242"/>
    </location>
    <ligand>
        <name>Mg(2+)</name>
        <dbReference type="ChEBI" id="CHEBI:18420"/>
    </ligand>
</feature>
<feature type="binding site" evidence="1">
    <location>
        <position position="285"/>
    </location>
    <ligand>
        <name>Mg(2+)</name>
        <dbReference type="ChEBI" id="CHEBI:18420"/>
    </ligand>
</feature>
<feature type="binding site" evidence="1">
    <location>
        <position position="312"/>
    </location>
    <ligand>
        <name>Mg(2+)</name>
        <dbReference type="ChEBI" id="CHEBI:18420"/>
    </ligand>
</feature>
<feature type="binding site" evidence="1">
    <location>
        <position position="337"/>
    </location>
    <ligand>
        <name>(2R)-2-phosphoglycerate</name>
        <dbReference type="ChEBI" id="CHEBI:58289"/>
    </ligand>
</feature>
<feature type="binding site" evidence="1">
    <location>
        <position position="366"/>
    </location>
    <ligand>
        <name>(2R)-2-phosphoglycerate</name>
        <dbReference type="ChEBI" id="CHEBI:58289"/>
    </ligand>
</feature>
<feature type="binding site" evidence="1">
    <location>
        <position position="367"/>
    </location>
    <ligand>
        <name>(2R)-2-phosphoglycerate</name>
        <dbReference type="ChEBI" id="CHEBI:58289"/>
    </ligand>
</feature>
<feature type="binding site" evidence="1">
    <location>
        <position position="388"/>
    </location>
    <ligand>
        <name>(2R)-2-phosphoglycerate</name>
        <dbReference type="ChEBI" id="CHEBI:58289"/>
    </ligand>
</feature>
<keyword id="KW-0963">Cytoplasm</keyword>
<keyword id="KW-0324">Glycolysis</keyword>
<keyword id="KW-0456">Lyase</keyword>
<keyword id="KW-0460">Magnesium</keyword>
<keyword id="KW-0479">Metal-binding</keyword>
<keyword id="KW-1185">Reference proteome</keyword>
<keyword id="KW-0964">Secreted</keyword>
<organism>
    <name type="scientific">Oleidesulfovibrio alaskensis (strain ATCC BAA-1058 / DSM 17464 / G20)</name>
    <name type="common">Desulfovibrio alaskensis</name>
    <dbReference type="NCBI Taxonomy" id="207559"/>
    <lineage>
        <taxon>Bacteria</taxon>
        <taxon>Pseudomonadati</taxon>
        <taxon>Thermodesulfobacteriota</taxon>
        <taxon>Desulfovibrionia</taxon>
        <taxon>Desulfovibrionales</taxon>
        <taxon>Desulfovibrionaceae</taxon>
        <taxon>Oleidesulfovibrio</taxon>
    </lineage>
</organism>
<name>ENO_OLEA2</name>
<proteinExistence type="inferred from homology"/>
<comment type="function">
    <text evidence="1">Catalyzes the reversible conversion of 2-phosphoglycerate (2-PG) into phosphoenolpyruvate (PEP). It is essential for the degradation of carbohydrates via glycolysis.</text>
</comment>
<comment type="catalytic activity">
    <reaction evidence="1">
        <text>(2R)-2-phosphoglycerate = phosphoenolpyruvate + H2O</text>
        <dbReference type="Rhea" id="RHEA:10164"/>
        <dbReference type="ChEBI" id="CHEBI:15377"/>
        <dbReference type="ChEBI" id="CHEBI:58289"/>
        <dbReference type="ChEBI" id="CHEBI:58702"/>
        <dbReference type="EC" id="4.2.1.11"/>
    </reaction>
</comment>
<comment type="cofactor">
    <cofactor evidence="1">
        <name>Mg(2+)</name>
        <dbReference type="ChEBI" id="CHEBI:18420"/>
    </cofactor>
    <text evidence="1">Binds a second Mg(2+) ion via substrate during catalysis.</text>
</comment>
<comment type="pathway">
    <text evidence="1">Carbohydrate degradation; glycolysis; pyruvate from D-glyceraldehyde 3-phosphate: step 4/5.</text>
</comment>
<comment type="subcellular location">
    <subcellularLocation>
        <location evidence="1">Cytoplasm</location>
    </subcellularLocation>
    <subcellularLocation>
        <location evidence="1">Secreted</location>
    </subcellularLocation>
    <subcellularLocation>
        <location evidence="1">Cell surface</location>
    </subcellularLocation>
    <text evidence="1">Fractions of enolase are present in both the cytoplasm and on the cell surface.</text>
</comment>
<comment type="similarity">
    <text evidence="1">Belongs to the enolase family.</text>
</comment>
<dbReference type="EC" id="4.2.1.11" evidence="1"/>
<dbReference type="EMBL" id="CP000112">
    <property type="protein sequence ID" value="ABB37096.1"/>
    <property type="molecule type" value="Genomic_DNA"/>
</dbReference>
<dbReference type="RefSeq" id="WP_011366442.1">
    <property type="nucleotide sequence ID" value="NC_007519.1"/>
</dbReference>
<dbReference type="SMR" id="Q316Q0"/>
<dbReference type="STRING" id="207559.Dde_0295"/>
<dbReference type="KEGG" id="dde:Dde_0295"/>
<dbReference type="eggNOG" id="COG0148">
    <property type="taxonomic scope" value="Bacteria"/>
</dbReference>
<dbReference type="HOGENOM" id="CLU_031223_2_1_7"/>
<dbReference type="UniPathway" id="UPA00109">
    <property type="reaction ID" value="UER00187"/>
</dbReference>
<dbReference type="Proteomes" id="UP000002710">
    <property type="component" value="Chromosome"/>
</dbReference>
<dbReference type="GO" id="GO:0009986">
    <property type="term" value="C:cell surface"/>
    <property type="evidence" value="ECO:0007669"/>
    <property type="project" value="UniProtKB-SubCell"/>
</dbReference>
<dbReference type="GO" id="GO:0005576">
    <property type="term" value="C:extracellular region"/>
    <property type="evidence" value="ECO:0007669"/>
    <property type="project" value="UniProtKB-SubCell"/>
</dbReference>
<dbReference type="GO" id="GO:0000015">
    <property type="term" value="C:phosphopyruvate hydratase complex"/>
    <property type="evidence" value="ECO:0007669"/>
    <property type="project" value="InterPro"/>
</dbReference>
<dbReference type="GO" id="GO:0000287">
    <property type="term" value="F:magnesium ion binding"/>
    <property type="evidence" value="ECO:0007669"/>
    <property type="project" value="UniProtKB-UniRule"/>
</dbReference>
<dbReference type="GO" id="GO:0004634">
    <property type="term" value="F:phosphopyruvate hydratase activity"/>
    <property type="evidence" value="ECO:0007669"/>
    <property type="project" value="UniProtKB-UniRule"/>
</dbReference>
<dbReference type="GO" id="GO:0006096">
    <property type="term" value="P:glycolytic process"/>
    <property type="evidence" value="ECO:0007669"/>
    <property type="project" value="UniProtKB-UniRule"/>
</dbReference>
<dbReference type="CDD" id="cd03313">
    <property type="entry name" value="enolase"/>
    <property type="match status" value="1"/>
</dbReference>
<dbReference type="FunFam" id="3.20.20.120:FF:000001">
    <property type="entry name" value="Enolase"/>
    <property type="match status" value="1"/>
</dbReference>
<dbReference type="FunFam" id="3.30.390.10:FF:000001">
    <property type="entry name" value="Enolase"/>
    <property type="match status" value="1"/>
</dbReference>
<dbReference type="Gene3D" id="3.20.20.120">
    <property type="entry name" value="Enolase-like C-terminal domain"/>
    <property type="match status" value="1"/>
</dbReference>
<dbReference type="Gene3D" id="3.30.390.10">
    <property type="entry name" value="Enolase-like, N-terminal domain"/>
    <property type="match status" value="1"/>
</dbReference>
<dbReference type="HAMAP" id="MF_00318">
    <property type="entry name" value="Enolase"/>
    <property type="match status" value="1"/>
</dbReference>
<dbReference type="InterPro" id="IPR000941">
    <property type="entry name" value="Enolase"/>
</dbReference>
<dbReference type="InterPro" id="IPR036849">
    <property type="entry name" value="Enolase-like_C_sf"/>
</dbReference>
<dbReference type="InterPro" id="IPR029017">
    <property type="entry name" value="Enolase-like_N"/>
</dbReference>
<dbReference type="InterPro" id="IPR020810">
    <property type="entry name" value="Enolase_C"/>
</dbReference>
<dbReference type="InterPro" id="IPR020809">
    <property type="entry name" value="Enolase_CS"/>
</dbReference>
<dbReference type="InterPro" id="IPR020811">
    <property type="entry name" value="Enolase_N"/>
</dbReference>
<dbReference type="NCBIfam" id="TIGR01060">
    <property type="entry name" value="eno"/>
    <property type="match status" value="1"/>
</dbReference>
<dbReference type="PANTHER" id="PTHR11902">
    <property type="entry name" value="ENOLASE"/>
    <property type="match status" value="1"/>
</dbReference>
<dbReference type="PANTHER" id="PTHR11902:SF1">
    <property type="entry name" value="ENOLASE"/>
    <property type="match status" value="1"/>
</dbReference>
<dbReference type="Pfam" id="PF00113">
    <property type="entry name" value="Enolase_C"/>
    <property type="match status" value="1"/>
</dbReference>
<dbReference type="Pfam" id="PF03952">
    <property type="entry name" value="Enolase_N"/>
    <property type="match status" value="1"/>
</dbReference>
<dbReference type="PIRSF" id="PIRSF001400">
    <property type="entry name" value="Enolase"/>
    <property type="match status" value="1"/>
</dbReference>
<dbReference type="PRINTS" id="PR00148">
    <property type="entry name" value="ENOLASE"/>
</dbReference>
<dbReference type="SFLD" id="SFLDF00002">
    <property type="entry name" value="enolase"/>
    <property type="match status" value="1"/>
</dbReference>
<dbReference type="SFLD" id="SFLDG00178">
    <property type="entry name" value="enolase"/>
    <property type="match status" value="1"/>
</dbReference>
<dbReference type="SMART" id="SM01192">
    <property type="entry name" value="Enolase_C"/>
    <property type="match status" value="1"/>
</dbReference>
<dbReference type="SMART" id="SM01193">
    <property type="entry name" value="Enolase_N"/>
    <property type="match status" value="1"/>
</dbReference>
<dbReference type="SUPFAM" id="SSF51604">
    <property type="entry name" value="Enolase C-terminal domain-like"/>
    <property type="match status" value="1"/>
</dbReference>
<dbReference type="SUPFAM" id="SSF54826">
    <property type="entry name" value="Enolase N-terminal domain-like"/>
    <property type="match status" value="1"/>
</dbReference>
<dbReference type="PROSITE" id="PS00164">
    <property type="entry name" value="ENOLASE"/>
    <property type="match status" value="1"/>
</dbReference>